<name>YBEY_CLOBM</name>
<protein>
    <recommendedName>
        <fullName evidence="1">Endoribonuclease YbeY</fullName>
        <ecNumber evidence="1">3.1.-.-</ecNumber>
    </recommendedName>
</protein>
<feature type="chain" id="PRO_1000089168" description="Endoribonuclease YbeY">
    <location>
        <begin position="1"/>
        <end position="166"/>
    </location>
</feature>
<feature type="binding site" evidence="1">
    <location>
        <position position="132"/>
    </location>
    <ligand>
        <name>Zn(2+)</name>
        <dbReference type="ChEBI" id="CHEBI:29105"/>
        <note>catalytic</note>
    </ligand>
</feature>
<feature type="binding site" evidence="1">
    <location>
        <position position="136"/>
    </location>
    <ligand>
        <name>Zn(2+)</name>
        <dbReference type="ChEBI" id="CHEBI:29105"/>
        <note>catalytic</note>
    </ligand>
</feature>
<feature type="binding site" evidence="1">
    <location>
        <position position="142"/>
    </location>
    <ligand>
        <name>Zn(2+)</name>
        <dbReference type="ChEBI" id="CHEBI:29105"/>
        <note>catalytic</note>
    </ligand>
</feature>
<accession>B1KZM6</accession>
<gene>
    <name evidence="1" type="primary">ybeY</name>
    <name type="ordered locus">CLK_2333</name>
</gene>
<keyword id="KW-0963">Cytoplasm</keyword>
<keyword id="KW-0255">Endonuclease</keyword>
<keyword id="KW-0378">Hydrolase</keyword>
<keyword id="KW-0479">Metal-binding</keyword>
<keyword id="KW-0540">Nuclease</keyword>
<keyword id="KW-0690">Ribosome biogenesis</keyword>
<keyword id="KW-0698">rRNA processing</keyword>
<keyword id="KW-0862">Zinc</keyword>
<evidence type="ECO:0000255" key="1">
    <source>
        <dbReference type="HAMAP-Rule" id="MF_00009"/>
    </source>
</evidence>
<organism>
    <name type="scientific">Clostridium botulinum (strain Loch Maree / Type A3)</name>
    <dbReference type="NCBI Taxonomy" id="498214"/>
    <lineage>
        <taxon>Bacteria</taxon>
        <taxon>Bacillati</taxon>
        <taxon>Bacillota</taxon>
        <taxon>Clostridia</taxon>
        <taxon>Eubacteriales</taxon>
        <taxon>Clostridiaceae</taxon>
        <taxon>Clostridium</taxon>
    </lineage>
</organism>
<dbReference type="EC" id="3.1.-.-" evidence="1"/>
<dbReference type="EMBL" id="CP000962">
    <property type="protein sequence ID" value="ACA54703.1"/>
    <property type="molecule type" value="Genomic_DNA"/>
</dbReference>
<dbReference type="RefSeq" id="WP_012342775.1">
    <property type="nucleotide sequence ID" value="NC_010520.1"/>
</dbReference>
<dbReference type="SMR" id="B1KZM6"/>
<dbReference type="KEGG" id="cbl:CLK_2333"/>
<dbReference type="HOGENOM" id="CLU_106710_3_0_9"/>
<dbReference type="GO" id="GO:0005737">
    <property type="term" value="C:cytoplasm"/>
    <property type="evidence" value="ECO:0007669"/>
    <property type="project" value="UniProtKB-SubCell"/>
</dbReference>
<dbReference type="GO" id="GO:0004222">
    <property type="term" value="F:metalloendopeptidase activity"/>
    <property type="evidence" value="ECO:0007669"/>
    <property type="project" value="InterPro"/>
</dbReference>
<dbReference type="GO" id="GO:0004521">
    <property type="term" value="F:RNA endonuclease activity"/>
    <property type="evidence" value="ECO:0007669"/>
    <property type="project" value="UniProtKB-UniRule"/>
</dbReference>
<dbReference type="GO" id="GO:0008270">
    <property type="term" value="F:zinc ion binding"/>
    <property type="evidence" value="ECO:0007669"/>
    <property type="project" value="UniProtKB-UniRule"/>
</dbReference>
<dbReference type="GO" id="GO:0006364">
    <property type="term" value="P:rRNA processing"/>
    <property type="evidence" value="ECO:0007669"/>
    <property type="project" value="UniProtKB-UniRule"/>
</dbReference>
<dbReference type="Gene3D" id="3.40.390.30">
    <property type="entry name" value="Metalloproteases ('zincins'), catalytic domain"/>
    <property type="match status" value="1"/>
</dbReference>
<dbReference type="HAMAP" id="MF_00009">
    <property type="entry name" value="Endoribonucl_YbeY"/>
    <property type="match status" value="1"/>
</dbReference>
<dbReference type="InterPro" id="IPR023091">
    <property type="entry name" value="MetalPrtase_cat_dom_sf_prd"/>
</dbReference>
<dbReference type="InterPro" id="IPR002036">
    <property type="entry name" value="YbeY"/>
</dbReference>
<dbReference type="InterPro" id="IPR020549">
    <property type="entry name" value="YbeY_CS"/>
</dbReference>
<dbReference type="NCBIfam" id="TIGR00043">
    <property type="entry name" value="rRNA maturation RNase YbeY"/>
    <property type="match status" value="1"/>
</dbReference>
<dbReference type="PANTHER" id="PTHR46986">
    <property type="entry name" value="ENDORIBONUCLEASE YBEY, CHLOROPLASTIC"/>
    <property type="match status" value="1"/>
</dbReference>
<dbReference type="PANTHER" id="PTHR46986:SF1">
    <property type="entry name" value="ENDORIBONUCLEASE YBEY, CHLOROPLASTIC"/>
    <property type="match status" value="1"/>
</dbReference>
<dbReference type="Pfam" id="PF02130">
    <property type="entry name" value="YbeY"/>
    <property type="match status" value="1"/>
</dbReference>
<dbReference type="SUPFAM" id="SSF55486">
    <property type="entry name" value="Metalloproteases ('zincins'), catalytic domain"/>
    <property type="match status" value="1"/>
</dbReference>
<dbReference type="PROSITE" id="PS01306">
    <property type="entry name" value="UPF0054"/>
    <property type="match status" value="1"/>
</dbReference>
<proteinExistence type="inferred from homology"/>
<comment type="function">
    <text evidence="1">Single strand-specific metallo-endoribonuclease involved in late-stage 70S ribosome quality control and in maturation of the 3' terminus of the 16S rRNA.</text>
</comment>
<comment type="cofactor">
    <cofactor evidence="1">
        <name>Zn(2+)</name>
        <dbReference type="ChEBI" id="CHEBI:29105"/>
    </cofactor>
    <text evidence="1">Binds 1 zinc ion.</text>
</comment>
<comment type="subcellular location">
    <subcellularLocation>
        <location evidence="1">Cytoplasm</location>
    </subcellularLocation>
</comment>
<comment type="similarity">
    <text evidence="1">Belongs to the endoribonuclease YbeY family.</text>
</comment>
<sequence>MIYIDNRQNKIKVDEEFENKIKEIIDYALKEEKVNIDYEISVIFIDNNSIKEINKDYRNIDKATDVLSFPMLDYEEGEVFKDVYLNYEFDESDLDEGNLVLGDIALSLEKAEEQSKEFGHSFLRETCYLTIHSVLHLLGYDHMEEDEKAIMRQREEEILKSFNLHR</sequence>
<reference key="1">
    <citation type="journal article" date="2007" name="PLoS ONE">
        <title>Analysis of the neurotoxin complex genes in Clostridium botulinum A1-A4 and B1 strains: BoNT/A3, /Ba4 and /B1 clusters are located within plasmids.</title>
        <authorList>
            <person name="Smith T.J."/>
            <person name="Hill K.K."/>
            <person name="Foley B.T."/>
            <person name="Detter J.C."/>
            <person name="Munk A.C."/>
            <person name="Bruce D.C."/>
            <person name="Doggett N.A."/>
            <person name="Smith L.A."/>
            <person name="Marks J.D."/>
            <person name="Xie G."/>
            <person name="Brettin T.S."/>
        </authorList>
    </citation>
    <scope>NUCLEOTIDE SEQUENCE [LARGE SCALE GENOMIC DNA]</scope>
    <source>
        <strain>Loch Maree / Type A3</strain>
    </source>
</reference>